<sequence>MNHLHRLFRITQVDRPVLLAITRRLSSKVPTEPTWKEVDESKLPNPTKIDQDTIAHLERLALVDFANKEGIRRLEAAIRFADQMFLVDTTGVEPMDSVLEDRELYLRDDVVTEGNCKDDILRNAGKVVEDYFVAPPGNIPLPKKEEYDS</sequence>
<name>GATC_BRAFL</name>
<comment type="function">
    <text evidence="1">Allows the formation of correctly charged Gln-tRNA(Gln) through the transamidation of misacylated Glu-tRNA(Gln) in the mitochondria. The reaction takes place in the presence of glutamine and ATP through an activated gamma-phospho-Glu-tRNA(Gln).</text>
</comment>
<comment type="catalytic activity">
    <reaction evidence="1">
        <text>L-glutamyl-tRNA(Gln) + L-glutamine + ATP + H2O = L-glutaminyl-tRNA(Gln) + L-glutamate + ADP + phosphate + H(+)</text>
        <dbReference type="Rhea" id="RHEA:17521"/>
        <dbReference type="Rhea" id="RHEA-COMP:9681"/>
        <dbReference type="Rhea" id="RHEA-COMP:9684"/>
        <dbReference type="ChEBI" id="CHEBI:15377"/>
        <dbReference type="ChEBI" id="CHEBI:15378"/>
        <dbReference type="ChEBI" id="CHEBI:29985"/>
        <dbReference type="ChEBI" id="CHEBI:30616"/>
        <dbReference type="ChEBI" id="CHEBI:43474"/>
        <dbReference type="ChEBI" id="CHEBI:58359"/>
        <dbReference type="ChEBI" id="CHEBI:78520"/>
        <dbReference type="ChEBI" id="CHEBI:78521"/>
        <dbReference type="ChEBI" id="CHEBI:456216"/>
    </reaction>
</comment>
<comment type="subunit">
    <text evidence="1">Subunit of the heterotrimeric GatCAB amidotransferase (AdT) complex, composed of A, B and C subunits.</text>
</comment>
<comment type="subcellular location">
    <subcellularLocation>
        <location evidence="1">Mitochondrion</location>
    </subcellularLocation>
</comment>
<comment type="similarity">
    <text evidence="1">Belongs to the GatC family.</text>
</comment>
<organism>
    <name type="scientific">Branchiostoma floridae</name>
    <name type="common">Florida lancelet</name>
    <name type="synonym">Amphioxus</name>
    <dbReference type="NCBI Taxonomy" id="7739"/>
    <lineage>
        <taxon>Eukaryota</taxon>
        <taxon>Metazoa</taxon>
        <taxon>Chordata</taxon>
        <taxon>Cephalochordata</taxon>
        <taxon>Leptocardii</taxon>
        <taxon>Amphioxiformes</taxon>
        <taxon>Branchiostomatidae</taxon>
        <taxon>Branchiostoma</taxon>
    </lineage>
</organism>
<dbReference type="EC" id="6.3.5.-" evidence="1"/>
<dbReference type="EMBL" id="GG666469">
    <property type="protein sequence ID" value="EEN67814.1"/>
    <property type="molecule type" value="Genomic_DNA"/>
</dbReference>
<dbReference type="RefSeq" id="XP_002611805.1">
    <property type="nucleotide sequence ID" value="XM_002611759.1"/>
</dbReference>
<dbReference type="SMR" id="C3XVM1"/>
<dbReference type="STRING" id="7739.C3XVM1"/>
<dbReference type="eggNOG" id="KOG4247">
    <property type="taxonomic scope" value="Eukaryota"/>
</dbReference>
<dbReference type="InParanoid" id="C3XVM1"/>
<dbReference type="OMA" id="VTEGECA"/>
<dbReference type="OrthoDB" id="5394539at2759"/>
<dbReference type="Proteomes" id="UP000001554">
    <property type="component" value="Unplaced"/>
</dbReference>
<dbReference type="GO" id="GO:0030956">
    <property type="term" value="C:glutamyl-tRNA(Gln) amidotransferase complex"/>
    <property type="evidence" value="ECO:0000318"/>
    <property type="project" value="GO_Central"/>
</dbReference>
<dbReference type="GO" id="GO:0005739">
    <property type="term" value="C:mitochondrion"/>
    <property type="evidence" value="ECO:0000318"/>
    <property type="project" value="GO_Central"/>
</dbReference>
<dbReference type="GO" id="GO:0005524">
    <property type="term" value="F:ATP binding"/>
    <property type="evidence" value="ECO:0007669"/>
    <property type="project" value="UniProtKB-KW"/>
</dbReference>
<dbReference type="GO" id="GO:0050567">
    <property type="term" value="F:glutaminyl-tRNA synthase (glutamine-hydrolyzing) activity"/>
    <property type="evidence" value="ECO:0007669"/>
    <property type="project" value="UniProtKB-UniRule"/>
</dbReference>
<dbReference type="GO" id="GO:0070681">
    <property type="term" value="P:glutaminyl-tRNAGln biosynthesis via transamidation"/>
    <property type="evidence" value="ECO:0000318"/>
    <property type="project" value="GO_Central"/>
</dbReference>
<dbReference type="GO" id="GO:0032543">
    <property type="term" value="P:mitochondrial translation"/>
    <property type="evidence" value="ECO:0000318"/>
    <property type="project" value="GO_Central"/>
</dbReference>
<dbReference type="GO" id="GO:0006450">
    <property type="term" value="P:regulation of translational fidelity"/>
    <property type="evidence" value="ECO:0007669"/>
    <property type="project" value="InterPro"/>
</dbReference>
<dbReference type="HAMAP" id="MF_00122">
    <property type="entry name" value="GatC"/>
    <property type="match status" value="1"/>
</dbReference>
<dbReference type="InterPro" id="IPR036113">
    <property type="entry name" value="Asp/Glu-ADT_sf_sub_c"/>
</dbReference>
<dbReference type="InterPro" id="IPR003837">
    <property type="entry name" value="GatC"/>
</dbReference>
<dbReference type="NCBIfam" id="TIGR00135">
    <property type="entry name" value="gatC"/>
    <property type="match status" value="1"/>
</dbReference>
<dbReference type="PANTHER" id="PTHR15004">
    <property type="entry name" value="GLUTAMYL-TRNA(GLN) AMIDOTRANSFERASE SUBUNIT C, MITOCHONDRIAL"/>
    <property type="match status" value="1"/>
</dbReference>
<dbReference type="PANTHER" id="PTHR15004:SF0">
    <property type="entry name" value="GLUTAMYL-TRNA(GLN) AMIDOTRANSFERASE SUBUNIT C, MITOCHONDRIAL"/>
    <property type="match status" value="1"/>
</dbReference>
<dbReference type="Pfam" id="PF02686">
    <property type="entry name" value="GatC"/>
    <property type="match status" value="1"/>
</dbReference>
<dbReference type="SUPFAM" id="SSF141000">
    <property type="entry name" value="Glu-tRNAGln amidotransferase C subunit"/>
    <property type="match status" value="1"/>
</dbReference>
<evidence type="ECO:0000255" key="1">
    <source>
        <dbReference type="HAMAP-Rule" id="MF_03149"/>
    </source>
</evidence>
<accession>C3XVM1</accession>
<feature type="transit peptide" description="Mitochondrion" evidence="1">
    <location>
        <begin position="1"/>
        <end position="25"/>
    </location>
</feature>
<feature type="chain" id="PRO_0000413294" description="Glutamyl-tRNA(Gln) amidotransferase subunit C, mitochondrial">
    <location>
        <begin position="26"/>
        <end position="149"/>
    </location>
</feature>
<proteinExistence type="inferred from homology"/>
<keyword id="KW-0067">ATP-binding</keyword>
<keyword id="KW-0436">Ligase</keyword>
<keyword id="KW-0496">Mitochondrion</keyword>
<keyword id="KW-0547">Nucleotide-binding</keyword>
<keyword id="KW-0648">Protein biosynthesis</keyword>
<keyword id="KW-1185">Reference proteome</keyword>
<keyword id="KW-0809">Transit peptide</keyword>
<gene>
    <name type="ORF">BRAFLDRAFT_270748</name>
</gene>
<protein>
    <recommendedName>
        <fullName evidence="1">Glutamyl-tRNA(Gln) amidotransferase subunit C, mitochondrial</fullName>
        <shortName evidence="1">Glu-AdT subunit C</shortName>
        <ecNumber evidence="1">6.3.5.-</ecNumber>
    </recommendedName>
</protein>
<reference key="1">
    <citation type="journal article" date="2008" name="Nature">
        <title>The amphioxus genome and the evolution of the chordate karyotype.</title>
        <authorList>
            <person name="Putnam N.H."/>
            <person name="Butts T."/>
            <person name="Ferrier D.E.K."/>
            <person name="Furlong R.F."/>
            <person name="Hellsten U."/>
            <person name="Kawashima T."/>
            <person name="Robinson-Rechavi M."/>
            <person name="Shoguchi E."/>
            <person name="Terry A."/>
            <person name="Yu J.-K."/>
            <person name="Benito-Gutierrez E.L."/>
            <person name="Dubchak I."/>
            <person name="Garcia-Fernandez J."/>
            <person name="Gibson-Brown J.J."/>
            <person name="Grigoriev I.V."/>
            <person name="Horton A.C."/>
            <person name="de Jong P.J."/>
            <person name="Jurka J."/>
            <person name="Kapitonov V.V."/>
            <person name="Kohara Y."/>
            <person name="Kuroki Y."/>
            <person name="Lindquist E."/>
            <person name="Lucas S."/>
            <person name="Osoegawa K."/>
            <person name="Pennacchio L.A."/>
            <person name="Salamov A.A."/>
            <person name="Satou Y."/>
            <person name="Sauka-Spengler T."/>
            <person name="Schmutz J."/>
            <person name="Shin-I T."/>
            <person name="Toyoda A."/>
            <person name="Bronner-Fraser M."/>
            <person name="Fujiyama A."/>
            <person name="Holland L.Z."/>
            <person name="Holland P.W.H."/>
            <person name="Satoh N."/>
            <person name="Rokhsar D.S."/>
        </authorList>
    </citation>
    <scope>NUCLEOTIDE SEQUENCE [LARGE SCALE GENOMIC DNA]</scope>
    <source>
        <strain>S238N-H82</strain>
        <tissue>Testis</tissue>
    </source>
</reference>